<comment type="function">
    <text evidence="1">Receptor for MSH (alpha, beta and gamma) and ACTH. The activity of this receptor is mediated by G proteins which activate adenylate cyclase. Mediates melanogenesis, the production of eumelanin (black/brown) and phaeomelanin (red/yellow), via regulation of cAMP signaling in melanocytes.</text>
</comment>
<comment type="subunit">
    <text evidence="1">Interacts with MGRN1, but does not undergo MGRN1-mediated ubiquitination; this interaction competes with GNAS-binding and thus inhibits agonist-induced cAMP production. Interacts with OPN3; the interaction results in a decrease in MC1R-mediated cAMP signaling and ultimately a decrease in melanin production in melanocytes.</text>
</comment>
<comment type="subcellular location">
    <subcellularLocation>
        <location evidence="1">Cell membrane</location>
        <topology evidence="2">Multi-pass membrane protein</topology>
    </subcellularLocation>
</comment>
<comment type="similarity">
    <text evidence="3">Belongs to the G-protein coupled receptor 1 family.</text>
</comment>
<protein>
    <recommendedName>
        <fullName>Melanocyte-stimulating hormone receptor</fullName>
        <shortName>MSH-R</shortName>
    </recommendedName>
    <alternativeName>
        <fullName>Melanocortin receptor 1</fullName>
        <shortName>MC1-R</shortName>
    </alternativeName>
</protein>
<reference key="1">
    <citation type="journal article" date="2003" name="Am. J. Phys. Anthropol.">
        <title>Evolution of a pigmentation gene, the melanocortin-1 receptor, in primates.</title>
        <authorList>
            <person name="Mundy N.I."/>
            <person name="Kelly J."/>
        </authorList>
    </citation>
    <scope>NUCLEOTIDE SEQUENCE [GENOMIC DNA]</scope>
    <source>
        <strain>Isolate 1</strain>
    </source>
</reference>
<organism>
    <name type="scientific">Varecia variegata variegata</name>
    <name type="common">Black and white ruffed lemur</name>
    <dbReference type="NCBI Taxonomy" id="87289"/>
    <lineage>
        <taxon>Eukaryota</taxon>
        <taxon>Metazoa</taxon>
        <taxon>Chordata</taxon>
        <taxon>Craniata</taxon>
        <taxon>Vertebrata</taxon>
        <taxon>Euteleostomi</taxon>
        <taxon>Mammalia</taxon>
        <taxon>Eutheria</taxon>
        <taxon>Euarchontoglires</taxon>
        <taxon>Primates</taxon>
        <taxon>Strepsirrhini</taxon>
        <taxon>Lemuriformes</taxon>
        <taxon>Lemuridae</taxon>
        <taxon>Varecia</taxon>
    </lineage>
</organism>
<name>MSHR_VARVV</name>
<keyword id="KW-1003">Cell membrane</keyword>
<keyword id="KW-0297">G-protein coupled receptor</keyword>
<keyword id="KW-0325">Glycoprotein</keyword>
<keyword id="KW-0472">Membrane</keyword>
<keyword id="KW-0675">Receptor</keyword>
<keyword id="KW-0807">Transducer</keyword>
<keyword id="KW-0812">Transmembrane</keyword>
<keyword id="KW-1133">Transmembrane helix</keyword>
<proteinExistence type="inferred from homology"/>
<gene>
    <name type="primary">MC1R</name>
</gene>
<accession>Q864F7</accession>
<feature type="chain" id="PRO_0000069857" description="Melanocyte-stimulating hormone receptor">
    <location>
        <begin position="1"/>
        <end position="317"/>
    </location>
</feature>
<feature type="topological domain" description="Extracellular" evidence="2">
    <location>
        <begin position="1"/>
        <end position="37"/>
    </location>
</feature>
<feature type="transmembrane region" description="Helical; Name=1" evidence="2">
    <location>
        <begin position="38"/>
        <end position="63"/>
    </location>
</feature>
<feature type="topological domain" description="Cytoplasmic" evidence="2">
    <location>
        <begin position="64"/>
        <end position="72"/>
    </location>
</feature>
<feature type="transmembrane region" description="Helical; Name=2" evidence="2">
    <location>
        <begin position="73"/>
        <end position="93"/>
    </location>
</feature>
<feature type="topological domain" description="Extracellular" evidence="2">
    <location>
        <begin position="94"/>
        <end position="118"/>
    </location>
</feature>
<feature type="transmembrane region" description="Helical; Name=3" evidence="2">
    <location>
        <begin position="119"/>
        <end position="140"/>
    </location>
</feature>
<feature type="topological domain" description="Cytoplasmic" evidence="2">
    <location>
        <begin position="141"/>
        <end position="163"/>
    </location>
</feature>
<feature type="transmembrane region" description="Helical; Name=4" evidence="2">
    <location>
        <begin position="164"/>
        <end position="183"/>
    </location>
</feature>
<feature type="topological domain" description="Extracellular" evidence="2">
    <location>
        <begin position="184"/>
        <end position="191"/>
    </location>
</feature>
<feature type="transmembrane region" description="Helical; Name=5" evidence="2">
    <location>
        <begin position="192"/>
        <end position="211"/>
    </location>
</feature>
<feature type="topological domain" description="Cytoplasmic" evidence="2">
    <location>
        <begin position="212"/>
        <end position="240"/>
    </location>
</feature>
<feature type="transmembrane region" description="Helical; Name=6" evidence="2">
    <location>
        <begin position="241"/>
        <end position="266"/>
    </location>
</feature>
<feature type="topological domain" description="Extracellular" evidence="2">
    <location>
        <begin position="267"/>
        <end position="279"/>
    </location>
</feature>
<feature type="transmembrane region" description="Helical; Name=7" evidence="2">
    <location>
        <begin position="280"/>
        <end position="300"/>
    </location>
</feature>
<feature type="topological domain" description="Cytoplasmic" evidence="2">
    <location>
        <begin position="301"/>
        <end position="317"/>
    </location>
</feature>
<feature type="glycosylation site" description="N-linked (GlcNAc...) asparagine" evidence="2">
    <location>
        <position position="29"/>
    </location>
</feature>
<dbReference type="EMBL" id="AY205140">
    <property type="protein sequence ID" value="AAP31014.1"/>
    <property type="molecule type" value="Genomic_DNA"/>
</dbReference>
<dbReference type="SMR" id="Q864F7"/>
<dbReference type="GlyCosmos" id="Q864F7">
    <property type="glycosylation" value="1 site, No reported glycans"/>
</dbReference>
<dbReference type="GO" id="GO:0005886">
    <property type="term" value="C:plasma membrane"/>
    <property type="evidence" value="ECO:0000250"/>
    <property type="project" value="UniProtKB"/>
</dbReference>
<dbReference type="GO" id="GO:0004980">
    <property type="term" value="F:melanocyte-stimulating hormone receptor activity"/>
    <property type="evidence" value="ECO:0007669"/>
    <property type="project" value="InterPro"/>
</dbReference>
<dbReference type="GO" id="GO:0007189">
    <property type="term" value="P:adenylate cyclase-activating G protein-coupled receptor signaling pathway"/>
    <property type="evidence" value="ECO:0007669"/>
    <property type="project" value="UniProtKB-ARBA"/>
</dbReference>
<dbReference type="FunFam" id="1.20.1070.10:FF:000211">
    <property type="entry name" value="Melanocyte-stimulating hormone receptor"/>
    <property type="match status" value="1"/>
</dbReference>
<dbReference type="Gene3D" id="1.20.1070.10">
    <property type="entry name" value="Rhodopsin 7-helix transmembrane proteins"/>
    <property type="match status" value="1"/>
</dbReference>
<dbReference type="InterPro" id="IPR000276">
    <property type="entry name" value="GPCR_Rhodpsn"/>
</dbReference>
<dbReference type="InterPro" id="IPR017452">
    <property type="entry name" value="GPCR_Rhodpsn_7TM"/>
</dbReference>
<dbReference type="InterPro" id="IPR001671">
    <property type="entry name" value="Melcrt_ACTH_rcpt"/>
</dbReference>
<dbReference type="InterPro" id="IPR000761">
    <property type="entry name" value="MSH_rcpt"/>
</dbReference>
<dbReference type="PANTHER" id="PTHR22750">
    <property type="entry name" value="G-PROTEIN COUPLED RECEPTOR"/>
    <property type="match status" value="1"/>
</dbReference>
<dbReference type="Pfam" id="PF00001">
    <property type="entry name" value="7tm_1"/>
    <property type="match status" value="1"/>
</dbReference>
<dbReference type="PRINTS" id="PR00237">
    <property type="entry name" value="GPCRRHODOPSN"/>
</dbReference>
<dbReference type="PRINTS" id="PR00534">
    <property type="entry name" value="MCRFAMILY"/>
</dbReference>
<dbReference type="PRINTS" id="PR00536">
    <property type="entry name" value="MELNOCYTESHR"/>
</dbReference>
<dbReference type="SMART" id="SM01381">
    <property type="entry name" value="7TM_GPCR_Srsx"/>
    <property type="match status" value="1"/>
</dbReference>
<dbReference type="SUPFAM" id="SSF81321">
    <property type="entry name" value="Family A G protein-coupled receptor-like"/>
    <property type="match status" value="1"/>
</dbReference>
<dbReference type="PROSITE" id="PS00237">
    <property type="entry name" value="G_PROTEIN_RECEP_F1_1"/>
    <property type="match status" value="1"/>
</dbReference>
<dbReference type="PROSITE" id="PS50262">
    <property type="entry name" value="G_PROTEIN_RECEP_F1_2"/>
    <property type="match status" value="1"/>
</dbReference>
<sequence>MPVQGSLRSLVGAVNSTPTASPHLRPATNQTEPQCLEVSVPVGLFLCLGLVSLVENTLVVAVIAKNRNLHSPMYCFICCLALSDLLVSVSNVLKTAVLLLLEAGALAAQATVVQQLGNVINMLICSSMVSSLCFLGAIAMDRYISIFYALRYHSIVTLARARRAIAAVWVASILSSILFFTYYDRTAALLCLVVFFLAMLVLMAVLYVHMLTQACQHAQGIARLHKRQHPVQQGWGLKGAATLAVLLGVFFLCWGPLFLHLTLIAVCPQHPTCNCIVKNFKLFLALIICNAIVDPLIYAFRSQELRKTLKEVLLFSW</sequence>
<evidence type="ECO:0000250" key="1">
    <source>
        <dbReference type="UniProtKB" id="Q01726"/>
    </source>
</evidence>
<evidence type="ECO:0000255" key="2"/>
<evidence type="ECO:0000255" key="3">
    <source>
        <dbReference type="PROSITE-ProRule" id="PRU00521"/>
    </source>
</evidence>